<gene>
    <name evidence="1" type="primary">rpsF</name>
    <name type="ordered locus">Spro_0446</name>
</gene>
<keyword id="KW-0687">Ribonucleoprotein</keyword>
<keyword id="KW-0689">Ribosomal protein</keyword>
<keyword id="KW-0694">RNA-binding</keyword>
<keyword id="KW-0699">rRNA-binding</keyword>
<feature type="chain" id="PRO_1000059859" description="Small ribosomal subunit protein bS6">
    <location>
        <begin position="1"/>
        <end position="132"/>
    </location>
</feature>
<feature type="region of interest" description="Disordered" evidence="2">
    <location>
        <begin position="99"/>
        <end position="132"/>
    </location>
</feature>
<feature type="compositionally biased region" description="Basic and acidic residues" evidence="2">
    <location>
        <begin position="104"/>
        <end position="117"/>
    </location>
</feature>
<feature type="compositionally biased region" description="Acidic residues" evidence="2">
    <location>
        <begin position="121"/>
        <end position="132"/>
    </location>
</feature>
<accession>A8G8W4</accession>
<dbReference type="EMBL" id="CP000826">
    <property type="protein sequence ID" value="ABV39554.1"/>
    <property type="molecule type" value="Genomic_DNA"/>
</dbReference>
<dbReference type="SMR" id="A8G8W4"/>
<dbReference type="STRING" id="399741.Spro_0446"/>
<dbReference type="KEGG" id="spe:Spro_0446"/>
<dbReference type="eggNOG" id="COG0360">
    <property type="taxonomic scope" value="Bacteria"/>
</dbReference>
<dbReference type="HOGENOM" id="CLU_113441_6_1_6"/>
<dbReference type="OrthoDB" id="9812702at2"/>
<dbReference type="GO" id="GO:0022627">
    <property type="term" value="C:cytosolic small ribosomal subunit"/>
    <property type="evidence" value="ECO:0007669"/>
    <property type="project" value="TreeGrafter"/>
</dbReference>
<dbReference type="GO" id="GO:0070181">
    <property type="term" value="F:small ribosomal subunit rRNA binding"/>
    <property type="evidence" value="ECO:0007669"/>
    <property type="project" value="TreeGrafter"/>
</dbReference>
<dbReference type="GO" id="GO:0003735">
    <property type="term" value="F:structural constituent of ribosome"/>
    <property type="evidence" value="ECO:0007669"/>
    <property type="project" value="InterPro"/>
</dbReference>
<dbReference type="GO" id="GO:0006412">
    <property type="term" value="P:translation"/>
    <property type="evidence" value="ECO:0007669"/>
    <property type="project" value="UniProtKB-UniRule"/>
</dbReference>
<dbReference type="CDD" id="cd00473">
    <property type="entry name" value="bS6"/>
    <property type="match status" value="1"/>
</dbReference>
<dbReference type="FunFam" id="3.30.70.60:FF:000003">
    <property type="entry name" value="30S ribosomal protein S6"/>
    <property type="match status" value="1"/>
</dbReference>
<dbReference type="Gene3D" id="3.30.70.60">
    <property type="match status" value="1"/>
</dbReference>
<dbReference type="HAMAP" id="MF_00360">
    <property type="entry name" value="Ribosomal_bS6"/>
    <property type="match status" value="1"/>
</dbReference>
<dbReference type="InterPro" id="IPR000529">
    <property type="entry name" value="Ribosomal_bS6"/>
</dbReference>
<dbReference type="InterPro" id="IPR020815">
    <property type="entry name" value="Ribosomal_bS6_CS"/>
</dbReference>
<dbReference type="InterPro" id="IPR035980">
    <property type="entry name" value="Ribosomal_bS6_sf"/>
</dbReference>
<dbReference type="InterPro" id="IPR020814">
    <property type="entry name" value="Ribosomal_S6_plastid/chlpt"/>
</dbReference>
<dbReference type="InterPro" id="IPR014717">
    <property type="entry name" value="Transl_elong_EF1B/ribsomal_bS6"/>
</dbReference>
<dbReference type="NCBIfam" id="TIGR00166">
    <property type="entry name" value="S6"/>
    <property type="match status" value="1"/>
</dbReference>
<dbReference type="PANTHER" id="PTHR21011">
    <property type="entry name" value="MITOCHONDRIAL 28S RIBOSOMAL PROTEIN S6"/>
    <property type="match status" value="1"/>
</dbReference>
<dbReference type="PANTHER" id="PTHR21011:SF1">
    <property type="entry name" value="SMALL RIBOSOMAL SUBUNIT PROTEIN BS6M"/>
    <property type="match status" value="1"/>
</dbReference>
<dbReference type="Pfam" id="PF01250">
    <property type="entry name" value="Ribosomal_S6"/>
    <property type="match status" value="1"/>
</dbReference>
<dbReference type="SUPFAM" id="SSF54995">
    <property type="entry name" value="Ribosomal protein S6"/>
    <property type="match status" value="1"/>
</dbReference>
<dbReference type="PROSITE" id="PS01048">
    <property type="entry name" value="RIBOSOMAL_S6"/>
    <property type="match status" value="1"/>
</dbReference>
<reference key="1">
    <citation type="submission" date="2007-09" db="EMBL/GenBank/DDBJ databases">
        <title>Complete sequence of chromosome of Serratia proteamaculans 568.</title>
        <authorList>
            <consortium name="US DOE Joint Genome Institute"/>
            <person name="Copeland A."/>
            <person name="Lucas S."/>
            <person name="Lapidus A."/>
            <person name="Barry K."/>
            <person name="Glavina del Rio T."/>
            <person name="Dalin E."/>
            <person name="Tice H."/>
            <person name="Pitluck S."/>
            <person name="Chain P."/>
            <person name="Malfatti S."/>
            <person name="Shin M."/>
            <person name="Vergez L."/>
            <person name="Schmutz J."/>
            <person name="Larimer F."/>
            <person name="Land M."/>
            <person name="Hauser L."/>
            <person name="Kyrpides N."/>
            <person name="Kim E."/>
            <person name="Taghavi S."/>
            <person name="Newman L."/>
            <person name="Vangronsveld J."/>
            <person name="van der Lelie D."/>
            <person name="Richardson P."/>
        </authorList>
    </citation>
    <scope>NUCLEOTIDE SEQUENCE [LARGE SCALE GENOMIC DNA]</scope>
    <source>
        <strain>568</strain>
    </source>
</reference>
<name>RS6_SERP5</name>
<evidence type="ECO:0000255" key="1">
    <source>
        <dbReference type="HAMAP-Rule" id="MF_00360"/>
    </source>
</evidence>
<evidence type="ECO:0000256" key="2">
    <source>
        <dbReference type="SAM" id="MobiDB-lite"/>
    </source>
</evidence>
<evidence type="ECO:0000305" key="3"/>
<protein>
    <recommendedName>
        <fullName evidence="1">Small ribosomal subunit protein bS6</fullName>
    </recommendedName>
    <alternativeName>
        <fullName evidence="3">30S ribosomal protein S6</fullName>
    </alternativeName>
</protein>
<proteinExistence type="inferred from homology"/>
<organism>
    <name type="scientific">Serratia proteamaculans (strain 568)</name>
    <dbReference type="NCBI Taxonomy" id="399741"/>
    <lineage>
        <taxon>Bacteria</taxon>
        <taxon>Pseudomonadati</taxon>
        <taxon>Pseudomonadota</taxon>
        <taxon>Gammaproteobacteria</taxon>
        <taxon>Enterobacterales</taxon>
        <taxon>Yersiniaceae</taxon>
        <taxon>Serratia</taxon>
    </lineage>
</organism>
<comment type="function">
    <text evidence="1">Binds together with bS18 to 16S ribosomal RNA.</text>
</comment>
<comment type="similarity">
    <text evidence="1">Belongs to the bacterial ribosomal protein bS6 family.</text>
</comment>
<sequence>MRHYEIVFMVHPDQSEQVPGMIERYSATITNAAGQIHRLEDWGRRQLAYPINKLHKAHYVLLNVEAPQEAIDELETNFRFNDAVIRSMVMRVKHAVTEASPMVKAKDERRGDRREDFANETADDADAGDSEE</sequence>